<evidence type="ECO:0000255" key="1">
    <source>
        <dbReference type="HAMAP-Rule" id="MF_01906"/>
    </source>
</evidence>
<evidence type="ECO:0000269" key="2">
    <source>
    </source>
</evidence>
<evidence type="ECO:0000269" key="3">
    <source>
    </source>
</evidence>
<evidence type="ECO:0000269" key="4">
    <source>
    </source>
</evidence>
<evidence type="ECO:0000305" key="5"/>
<keyword id="KW-0963">Cytoplasm</keyword>
<keyword id="KW-0378">Hydrolase</keyword>
<keyword id="KW-1185">Reference proteome</keyword>
<reference key="1">
    <citation type="journal article" date="2002" name="J. Biosci. Bioeng.">
        <title>Cloning of an intracellular D(-)-3-hydroxybutyrate-oligomer hydrolase gene from Ralstonia eutropha H16 and identification of the active site serine residue by site-directed mutagenesis.</title>
        <authorList>
            <person name="Saegusa H."/>
            <person name="Shiraki M."/>
            <person name="Saito T."/>
        </authorList>
    </citation>
    <scope>NUCLEOTIDE SEQUENCE [GENOMIC DNA]</scope>
    <scope>FUNCTION</scope>
    <scope>ACTIVITY REGULATION</scope>
    <scope>SUBCELLULAR LOCATION</scope>
    <scope>INDUCTION</scope>
    <scope>MUTAGENESIS OF SER-179; SER-317; SER-320 AND SER-591</scope>
</reference>
<reference key="2">
    <citation type="journal article" date="2006" name="Nat. Biotechnol.">
        <title>Genome sequence of the bioplastic-producing 'Knallgas' bacterium Ralstonia eutropha H16.</title>
        <authorList>
            <person name="Pohlmann A."/>
            <person name="Fricke W.F."/>
            <person name="Reinecke F."/>
            <person name="Kusian B."/>
            <person name="Liesegang H."/>
            <person name="Cramm R."/>
            <person name="Eitinger T."/>
            <person name="Ewering C."/>
            <person name="Poetter M."/>
            <person name="Schwartz E."/>
            <person name="Strittmatter A."/>
            <person name="Voss I."/>
            <person name="Gottschalk G."/>
            <person name="Steinbuechel A."/>
            <person name="Friedrich B."/>
            <person name="Bowien B."/>
        </authorList>
    </citation>
    <scope>NUCLEOTIDE SEQUENCE [LARGE SCALE GENOMIC DNA]</scope>
    <source>
        <strain>ATCC 17699 / DSM 428 / KCTC 22496 / NCIMB 10442 / H16 / Stanier 337</strain>
    </source>
</reference>
<reference key="3">
    <citation type="journal article" date="2003" name="J. Bacteriol.">
        <title>Purification and properties of an intracellular 3-hydroxybutyrate-oligomer hydrolase (PhaZ2) in Ralstonia eutropha H16 and its identification as a novel intracellular poly(3-hydroxybutyrate) depolymerase.</title>
        <authorList>
            <person name="Kobayashi T."/>
            <person name="Shiraki M."/>
            <person name="Abe T."/>
            <person name="Sugiyama A."/>
            <person name="Saito T."/>
        </authorList>
    </citation>
    <scope>FUNCTION</scope>
    <scope>SUBCELLULAR LOCATION</scope>
    <scope>SUBSTRATE SPECIFICITY</scope>
    <scope>BIOPHYSICOCHEMICAL PROPERTIES</scope>
</reference>
<reference key="4">
    <citation type="journal article" date="2004" name="Curr. Microbiol.">
        <title>Roles of poly(3-hydroxybutyrate) depolymerase and 3HB-oligomer hydrolase in bacterial PHB metabolism.</title>
        <authorList>
            <person name="Sugiyama A."/>
            <person name="Kobayashi T."/>
            <person name="Shiraki M."/>
            <person name="Saito T."/>
        </authorList>
    </citation>
    <scope>FUNCTION</scope>
    <scope>BIOPHYSICOCHEMICAL PROPERTIES</scope>
    <scope>SUBSTRATE SPECIFICITY</scope>
</reference>
<dbReference type="EC" id="3.1.1.22" evidence="1"/>
<dbReference type="EMBL" id="AB003701">
    <property type="protein sequence ID" value="BAA19964.1"/>
    <property type="status" value="ALT_INIT"/>
    <property type="molecule type" value="Genomic_DNA"/>
</dbReference>
<dbReference type="EMBL" id="AM260479">
    <property type="protein sequence ID" value="CAJ93348.1"/>
    <property type="molecule type" value="Genomic_DNA"/>
</dbReference>
<dbReference type="PIR" id="T02884">
    <property type="entry name" value="T02884"/>
</dbReference>
<dbReference type="RefSeq" id="WP_011615575.1">
    <property type="nucleotide sequence ID" value="NC_008313.1"/>
</dbReference>
<dbReference type="STRING" id="381666.H16_A2251"/>
<dbReference type="ESTHER" id="cupnh-hboh">
    <property type="family name" value="OHBut_olig_hydro_put"/>
</dbReference>
<dbReference type="KEGG" id="reh:H16_A2251"/>
<dbReference type="PATRIC" id="fig|381666.6.peg.2656"/>
<dbReference type="eggNOG" id="ENOG502Z8QU">
    <property type="taxonomic scope" value="Bacteria"/>
</dbReference>
<dbReference type="HOGENOM" id="CLU_420258_0_0_4"/>
<dbReference type="OrthoDB" id="4294477at2"/>
<dbReference type="BRENDA" id="3.1.1.22">
    <property type="organism ID" value="231"/>
</dbReference>
<dbReference type="SABIO-RK" id="Q0K9H3"/>
<dbReference type="UniPathway" id="UPA00863"/>
<dbReference type="Proteomes" id="UP000008210">
    <property type="component" value="Chromosome 1"/>
</dbReference>
<dbReference type="GO" id="GO:0005737">
    <property type="term" value="C:cytoplasm"/>
    <property type="evidence" value="ECO:0007669"/>
    <property type="project" value="UniProtKB-SubCell"/>
</dbReference>
<dbReference type="GO" id="GO:0005615">
    <property type="term" value="C:extracellular space"/>
    <property type="evidence" value="ECO:0007669"/>
    <property type="project" value="InterPro"/>
</dbReference>
<dbReference type="GO" id="GO:0047989">
    <property type="term" value="F:hydroxybutyrate-dimer hydrolase activity"/>
    <property type="evidence" value="ECO:0007669"/>
    <property type="project" value="UniProtKB-UniRule"/>
</dbReference>
<dbReference type="GO" id="GO:0019605">
    <property type="term" value="P:butyrate metabolic process"/>
    <property type="evidence" value="ECO:0007669"/>
    <property type="project" value="UniProtKB-UniRule"/>
</dbReference>
<dbReference type="HAMAP" id="MF_01906">
    <property type="entry name" value="3HBOH"/>
    <property type="match status" value="1"/>
</dbReference>
<dbReference type="InterPro" id="IPR016582">
    <property type="entry name" value="OHBut_olig_hydro_put"/>
</dbReference>
<dbReference type="Pfam" id="PF10605">
    <property type="entry name" value="3HBOH"/>
    <property type="match status" value="1"/>
</dbReference>
<dbReference type="PIRSF" id="PIRSF011409">
    <property type="entry name" value="HObutyrate_olig_hydrol"/>
    <property type="match status" value="1"/>
</dbReference>
<protein>
    <recommendedName>
        <fullName evidence="1">D-(-)-3-hydroxybutyrate oligomer hydrolase</fullName>
        <shortName evidence="1">3HB-oligomer hydrolase</shortName>
        <shortName evidence="1">3HBOH</shortName>
        <ecNumber evidence="1">3.1.1.22</ecNumber>
    </recommendedName>
    <alternativeName>
        <fullName>Intracellular 3HB-oligomer hydrolase</fullName>
        <shortName>i3HBOH</shortName>
    </alternativeName>
</protein>
<feature type="chain" id="PRO_0000314429" description="D-(-)-3-hydroxybutyrate oligomer hydrolase">
    <location>
        <begin position="1"/>
        <end position="718"/>
    </location>
</feature>
<feature type="active site" description="Charge relay system">
    <location>
        <position position="320"/>
    </location>
</feature>
<feature type="mutagenesis site" description="Does not affect catalytic activity." evidence="4">
    <original>S</original>
    <variation>A</variation>
    <location>
        <position position="179"/>
    </location>
</feature>
<feature type="mutagenesis site" description="Does not affect catalytic activity." evidence="4">
    <original>S</original>
    <variation>A</variation>
    <location>
        <position position="317"/>
    </location>
</feature>
<feature type="mutagenesis site" description="Loss of catalytic activity." evidence="4">
    <original>S</original>
    <variation>A</variation>
    <location>
        <position position="320"/>
    </location>
</feature>
<feature type="mutagenesis site" description="Does not affect catalytic activity." evidence="4">
    <original>S</original>
    <variation>A</variation>
    <location>
        <position position="591"/>
    </location>
</feature>
<accession>Q0K9H3</accession>
<accession>O05992</accession>
<organism>
    <name type="scientific">Cupriavidus necator (strain ATCC 17699 / DSM 428 / KCTC 22496 / NCIMB 10442 / H16 / Stanier 337)</name>
    <name type="common">Ralstonia eutropha</name>
    <dbReference type="NCBI Taxonomy" id="381666"/>
    <lineage>
        <taxon>Bacteria</taxon>
        <taxon>Pseudomonadati</taxon>
        <taxon>Pseudomonadota</taxon>
        <taxon>Betaproteobacteria</taxon>
        <taxon>Burkholderiales</taxon>
        <taxon>Burkholderiaceae</taxon>
        <taxon>Cupriavidus</taxon>
    </lineage>
</organism>
<name>HBOH_CUPNH</name>
<proteinExistence type="evidence at protein level"/>
<comment type="function">
    <text evidence="1 2 3 4">Participates in the degradation of poly-3-hydroxybutyrate (PHB). It works downstream of poly(3-hydroxybutyrate) depolymerase, hydrolyzing D(-)-3-hydroxybutyrate oligomers of various length (3HB-oligomers) into 3HB-monomers. Seems to have also poly(3-hydroxybutyrate) depolymerase activity since it is able to release 3HB-monomers from artificial amorphous PHB.</text>
</comment>
<comment type="catalytic activity">
    <reaction evidence="1">
        <text>(3R)-hydroxybutanoate dimer + H2O = 2 (R)-3-hydroxybutanoate + H(+)</text>
        <dbReference type="Rhea" id="RHEA:10172"/>
        <dbReference type="ChEBI" id="CHEBI:10979"/>
        <dbReference type="ChEBI" id="CHEBI:10983"/>
        <dbReference type="ChEBI" id="CHEBI:15377"/>
        <dbReference type="ChEBI" id="CHEBI:15378"/>
        <dbReference type="EC" id="3.1.1.22"/>
    </reaction>
</comment>
<comment type="activity regulation">
    <text evidence="4">Inhibited by diisopropylfluorophosphate (DFP).</text>
</comment>
<comment type="biophysicochemical properties">
    <kinetics>
        <KM evidence="2 3">0.35 mM for linear 3HB-dimer</KM>
        <KM evidence="2 3">0.33 mM for linear 3HB-trimer</KM>
        <KM evidence="2 3">0.2 mM for cyclic 3HB-trimer</KM>
        <KM evidence="2 3">0.11 mM for linear 3HB-tetramer</KM>
        <KM evidence="2 3">0.15 mM for linear 3HB-pentamer</KM>
        <KM evidence="2 3">0.14 mM for cyclic 3HB-pentamer</KM>
        <KM evidence="2 3">0.25 mM for cyclic 3HB-hexamer</KM>
        <Vmax evidence="2 3">78.0 umol/min/mg enzyme with linear 3HB-dimer as substrate</Vmax>
        <Vmax evidence="2 3">59.0 umol/min/mg enzyme with linear 3HB-trimer as substrate</Vmax>
        <Vmax evidence="2 3">60.0 umol/min/mg enzyme with cyclic 3HB-trimer as substrate</Vmax>
        <Vmax evidence="2 3">54.0 umol/min/mg enzyme with linear 3HB-tetramer as substrate</Vmax>
        <Vmax evidence="2 3">50.0 umol/min/mg enzyme with linear 3HB-pentamer as substrate</Vmax>
        <Vmax evidence="2 3">59.0 umol/min/mg enzyme with cyclic 3HB-pentamer as substrate</Vmax>
        <Vmax evidence="2 3">60.0 umol/min/mg enzyme with cyclic 3HB-hexamer as substrate</Vmax>
    </kinetics>
</comment>
<comment type="pathway">
    <text evidence="1">Lipid metabolism; butanoate metabolism.</text>
</comment>
<comment type="subcellular location">
    <subcellularLocation>
        <location evidence="2 4">Cytoplasm</location>
    </subcellularLocation>
    <text>A fraction is associated with PBH granules.</text>
</comment>
<comment type="induction">
    <text evidence="4">Induced by PHB accumulation.</text>
</comment>
<comment type="similarity">
    <text evidence="1">Belongs to the D-(-)-3-hydroxybutyrate oligomer hydrolase family.</text>
</comment>
<comment type="sequence caution" evidence="5">
    <conflict type="erroneous initiation">
        <sequence resource="EMBL-CDS" id="BAA19964"/>
    </conflict>
</comment>
<gene>
    <name type="primary">phaZ2</name>
    <name type="synonym">phaY1</name>
    <name type="ordered locus">H16_A2251</name>
</gene>
<sequence length="718" mass="74286">MHSTQIPPQQKQKRRLRLTVLAAAASMLAAACVSGDDNNNGNGSNPNTKPANIGTVTINSYNGTTDDLLTAGLGKDGLASATAPLPANPTAPTAAELRRYAIHTNYRAIVDTTASGGYGSLYGPNVDAQGNVTGSDGKVAGVEYLAFSDDGSGQQNVTMLVQIPASFNTSKPCMITATSSGSRGVYGAIATGEWGLKRGCAVAYTDKGTGAAPHDLDTDTVPLIDGTRATRAAAGKNAQFAAPAGATSLADFTAANPHRLAFKHAHSQRNPEKDWGKFTLQAVEFAIWAINDRFGAVSANGTRQRTLDKDRIVVIASSVSNGGGAAVAAAEQDAGGLIDGVAVGEPNLNMPPNTGIVVQRGATPVAASGRTLYDYTTTANLLQHCAARATALTQAPFYTNPATATFFANRCQTLAEKGLVSGANTDEQSASALQALHDAGWEAESDDLHPSLAVFDVAAAISVNYANAYAQASVTDRLCGYSFASTLTDLKPAAIAPAALASMFATGNGVPPQPPVQLINDLDPQHGPYLNLASVSPSTLREDLNYDGANCLRSLLAGSDAAARALQAGQALTLRNGNLRGKPAVIVHGRSDGLLPVNHTSRPYLGLNRQQEGVTSKLSYVEVENAQHFDAFIGLVPGYSNRYVPLHVYLNRALDAVYDNLTAGKALPPSQVLRTTPRGGTLNTPAPALLPSNVPPFAASPAAGNAITVNANAVQVPD</sequence>